<reference key="1">
    <citation type="journal article" date="2001" name="Lancet">
        <title>Whole genome sequencing of meticillin-resistant Staphylococcus aureus.</title>
        <authorList>
            <person name="Kuroda M."/>
            <person name="Ohta T."/>
            <person name="Uchiyama I."/>
            <person name="Baba T."/>
            <person name="Yuzawa H."/>
            <person name="Kobayashi I."/>
            <person name="Cui L."/>
            <person name="Oguchi A."/>
            <person name="Aoki K."/>
            <person name="Nagai Y."/>
            <person name="Lian J.-Q."/>
            <person name="Ito T."/>
            <person name="Kanamori M."/>
            <person name="Matsumaru H."/>
            <person name="Maruyama A."/>
            <person name="Murakami H."/>
            <person name="Hosoyama A."/>
            <person name="Mizutani-Ui Y."/>
            <person name="Takahashi N.K."/>
            <person name="Sawano T."/>
            <person name="Inoue R."/>
            <person name="Kaito C."/>
            <person name="Sekimizu K."/>
            <person name="Hirakawa H."/>
            <person name="Kuhara S."/>
            <person name="Goto S."/>
            <person name="Yabuzaki J."/>
            <person name="Kanehisa M."/>
            <person name="Yamashita A."/>
            <person name="Oshima K."/>
            <person name="Furuya K."/>
            <person name="Yoshino C."/>
            <person name="Shiba T."/>
            <person name="Hattori M."/>
            <person name="Ogasawara N."/>
            <person name="Hayashi H."/>
            <person name="Hiramatsu K."/>
        </authorList>
    </citation>
    <scope>NUCLEOTIDE SEQUENCE [LARGE SCALE GENOMIC DNA]</scope>
    <source>
        <strain>N315</strain>
    </source>
</reference>
<reference key="2">
    <citation type="submission" date="2007-10" db="UniProtKB">
        <title>Shotgun proteomic analysis of total and membrane protein extracts of S. aureus strain N315.</title>
        <authorList>
            <person name="Vaezzadeh A.R."/>
            <person name="Deshusses J."/>
            <person name="Lescuyer P."/>
            <person name="Hochstrasser D.F."/>
        </authorList>
    </citation>
    <scope>IDENTIFICATION BY MASS SPECTROMETRY [LARGE SCALE ANALYSIS]</scope>
    <source>
        <strain>N315</strain>
    </source>
</reference>
<name>MTNN_STAAN</name>
<comment type="function">
    <text evidence="1">Catalyzes the irreversible cleavage of the glycosidic bond in both 5'-methylthioadenosine (MTA) and S-adenosylhomocysteine (SAH/AdoHcy) to adenine and the corresponding thioribose, 5'-methylthioribose and S-ribosylhomocysteine, respectively. Also cleaves 5'-deoxyadenosine, a toxic by-product of radical S-adenosylmethionine (SAM) enzymes, into 5-deoxyribose and adenine.</text>
</comment>
<comment type="catalytic activity">
    <reaction evidence="1">
        <text>S-adenosyl-L-homocysteine + H2O = S-(5-deoxy-D-ribos-5-yl)-L-homocysteine + adenine</text>
        <dbReference type="Rhea" id="RHEA:17805"/>
        <dbReference type="ChEBI" id="CHEBI:15377"/>
        <dbReference type="ChEBI" id="CHEBI:16708"/>
        <dbReference type="ChEBI" id="CHEBI:57856"/>
        <dbReference type="ChEBI" id="CHEBI:58195"/>
        <dbReference type="EC" id="3.2.2.9"/>
    </reaction>
</comment>
<comment type="catalytic activity">
    <reaction evidence="1">
        <text>S-methyl-5'-thioadenosine + H2O = 5-(methylsulfanyl)-D-ribose + adenine</text>
        <dbReference type="Rhea" id="RHEA:13617"/>
        <dbReference type="ChEBI" id="CHEBI:15377"/>
        <dbReference type="ChEBI" id="CHEBI:16708"/>
        <dbReference type="ChEBI" id="CHEBI:17509"/>
        <dbReference type="ChEBI" id="CHEBI:78440"/>
        <dbReference type="EC" id="3.2.2.9"/>
    </reaction>
</comment>
<comment type="catalytic activity">
    <reaction evidence="1">
        <text>5'-deoxyadenosine + H2O = 5-deoxy-D-ribose + adenine</text>
        <dbReference type="Rhea" id="RHEA:29859"/>
        <dbReference type="ChEBI" id="CHEBI:15377"/>
        <dbReference type="ChEBI" id="CHEBI:16708"/>
        <dbReference type="ChEBI" id="CHEBI:17319"/>
        <dbReference type="ChEBI" id="CHEBI:149540"/>
        <dbReference type="EC" id="3.2.2.9"/>
    </reaction>
    <physiologicalReaction direction="left-to-right" evidence="1">
        <dbReference type="Rhea" id="RHEA:29860"/>
    </physiologicalReaction>
</comment>
<comment type="pathway">
    <text evidence="1">Amino-acid biosynthesis; L-methionine biosynthesis via salvage pathway; S-methyl-5-thio-alpha-D-ribose 1-phosphate from S-methyl-5'-thioadenosine (hydrolase route): step 1/2.</text>
</comment>
<comment type="similarity">
    <text evidence="1">Belongs to the PNP/UDP phosphorylase family. MtnN subfamily.</text>
</comment>
<evidence type="ECO:0000255" key="1">
    <source>
        <dbReference type="HAMAP-Rule" id="MF_01684"/>
    </source>
</evidence>
<keyword id="KW-0028">Amino-acid biosynthesis</keyword>
<keyword id="KW-0378">Hydrolase</keyword>
<keyword id="KW-0486">Methionine biosynthesis</keyword>
<feature type="chain" id="PRO_0000359371" description="5'-methylthioadenosine/S-adenosylhomocysteine nucleosidase">
    <location>
        <begin position="1"/>
        <end position="228"/>
    </location>
</feature>
<feature type="active site" description="Proton acceptor" evidence="1">
    <location>
        <position position="11"/>
    </location>
</feature>
<feature type="active site" description="Proton donor" evidence="1">
    <location>
        <position position="196"/>
    </location>
</feature>
<feature type="binding site" evidence="1">
    <location>
        <position position="77"/>
    </location>
    <ligand>
        <name>substrate</name>
    </ligand>
</feature>
<feature type="binding site" evidence="1">
    <location>
        <position position="151"/>
    </location>
    <ligand>
        <name>substrate</name>
    </ligand>
</feature>
<feature type="binding site" evidence="1">
    <location>
        <begin position="172"/>
        <end position="173"/>
    </location>
    <ligand>
        <name>substrate</name>
    </ligand>
</feature>
<dbReference type="EC" id="3.2.2.9" evidence="1"/>
<dbReference type="EMBL" id="BA000018">
    <property type="protein sequence ID" value="BAB42691.1"/>
    <property type="molecule type" value="Genomic_DNA"/>
</dbReference>
<dbReference type="PIR" id="F89941">
    <property type="entry name" value="F89941"/>
</dbReference>
<dbReference type="RefSeq" id="WP_000579275.1">
    <property type="nucleotide sequence ID" value="NC_002745.2"/>
</dbReference>
<dbReference type="SMR" id="Q7A5B0"/>
<dbReference type="EnsemblBacteria" id="BAB42691">
    <property type="protein sequence ID" value="BAB42691"/>
    <property type="gene ID" value="BAB42691"/>
</dbReference>
<dbReference type="KEGG" id="sau:SA1427"/>
<dbReference type="HOGENOM" id="CLU_031248_2_2_9"/>
<dbReference type="UniPathway" id="UPA00904">
    <property type="reaction ID" value="UER00871"/>
</dbReference>
<dbReference type="GO" id="GO:0005829">
    <property type="term" value="C:cytosol"/>
    <property type="evidence" value="ECO:0007669"/>
    <property type="project" value="TreeGrafter"/>
</dbReference>
<dbReference type="GO" id="GO:0008782">
    <property type="term" value="F:adenosylhomocysteine nucleosidase activity"/>
    <property type="evidence" value="ECO:0007669"/>
    <property type="project" value="UniProtKB-UniRule"/>
</dbReference>
<dbReference type="GO" id="GO:0008930">
    <property type="term" value="F:methylthioadenosine nucleosidase activity"/>
    <property type="evidence" value="ECO:0007669"/>
    <property type="project" value="UniProtKB-UniRule"/>
</dbReference>
<dbReference type="GO" id="GO:0019509">
    <property type="term" value="P:L-methionine salvage from methylthioadenosine"/>
    <property type="evidence" value="ECO:0007669"/>
    <property type="project" value="UniProtKB-UniRule"/>
</dbReference>
<dbReference type="GO" id="GO:0019284">
    <property type="term" value="P:L-methionine salvage from S-adenosylmethionine"/>
    <property type="evidence" value="ECO:0007669"/>
    <property type="project" value="TreeGrafter"/>
</dbReference>
<dbReference type="GO" id="GO:0009164">
    <property type="term" value="P:nucleoside catabolic process"/>
    <property type="evidence" value="ECO:0007669"/>
    <property type="project" value="InterPro"/>
</dbReference>
<dbReference type="CDD" id="cd09008">
    <property type="entry name" value="MTAN"/>
    <property type="match status" value="1"/>
</dbReference>
<dbReference type="FunFam" id="3.40.50.1580:FF:000001">
    <property type="entry name" value="MTA/SAH nucleosidase family protein"/>
    <property type="match status" value="1"/>
</dbReference>
<dbReference type="Gene3D" id="3.40.50.1580">
    <property type="entry name" value="Nucleoside phosphorylase domain"/>
    <property type="match status" value="1"/>
</dbReference>
<dbReference type="HAMAP" id="MF_01684">
    <property type="entry name" value="Salvage_MtnN"/>
    <property type="match status" value="1"/>
</dbReference>
<dbReference type="InterPro" id="IPR010049">
    <property type="entry name" value="MTA_SAH_Nsdase"/>
</dbReference>
<dbReference type="InterPro" id="IPR000845">
    <property type="entry name" value="Nucleoside_phosphorylase_d"/>
</dbReference>
<dbReference type="InterPro" id="IPR035994">
    <property type="entry name" value="Nucleoside_phosphorylase_sf"/>
</dbReference>
<dbReference type="NCBIfam" id="TIGR01704">
    <property type="entry name" value="MTA_SAH-Nsdase"/>
    <property type="match status" value="1"/>
</dbReference>
<dbReference type="NCBIfam" id="NF004079">
    <property type="entry name" value="PRK05584.1"/>
    <property type="match status" value="1"/>
</dbReference>
<dbReference type="PANTHER" id="PTHR46832">
    <property type="entry name" value="5'-METHYLTHIOADENOSINE/S-ADENOSYLHOMOCYSTEINE NUCLEOSIDASE"/>
    <property type="match status" value="1"/>
</dbReference>
<dbReference type="PANTHER" id="PTHR46832:SF1">
    <property type="entry name" value="5'-METHYLTHIOADENOSINE_S-ADENOSYLHOMOCYSTEINE NUCLEOSIDASE"/>
    <property type="match status" value="1"/>
</dbReference>
<dbReference type="Pfam" id="PF01048">
    <property type="entry name" value="PNP_UDP_1"/>
    <property type="match status" value="1"/>
</dbReference>
<dbReference type="SUPFAM" id="SSF53167">
    <property type="entry name" value="Purine and uridine phosphorylases"/>
    <property type="match status" value="1"/>
</dbReference>
<protein>
    <recommendedName>
        <fullName evidence="1">5'-methylthioadenosine/S-adenosylhomocysteine nucleosidase</fullName>
        <shortName evidence="1">MTA/SAH nucleosidase</shortName>
        <shortName evidence="1">MTAN</shortName>
        <ecNumber evidence="1">3.2.2.9</ecNumber>
    </recommendedName>
    <alternativeName>
        <fullName evidence="1">5'-deoxyadenosine nucleosidase</fullName>
        <shortName evidence="1">DOA nucleosidase</shortName>
        <shortName evidence="1">dAdo nucleosidase</shortName>
    </alternativeName>
    <alternativeName>
        <fullName evidence="1">5'-methylthioadenosine nucleosidase</fullName>
        <shortName evidence="1">MTA nucleosidase</shortName>
    </alternativeName>
    <alternativeName>
        <fullName evidence="1">S-adenosylhomocysteine nucleosidase</fullName>
        <shortName evidence="1">AdoHcy nucleosidase</shortName>
        <shortName evidence="1">SAH nucleosidase</shortName>
        <shortName evidence="1">SRH nucleosidase</shortName>
    </alternativeName>
</protein>
<accession>Q7A5B0</accession>
<sequence>MIGIIGAMEEEVTILKNKLTQLSEISVAHVKFYTGILKDREVVITQSGIGKVNAAISTTLLINKFKPDVIINTGSAGALDESLNVGDVLISDDVKYHDADATAFGYEYGQIPQMPVAFQSSKPLIEKVSQVVQQQQLTAKVGLIVSGDSFIGSVEQRQKIKKAFPNAMAVEMEATAIAQTCYQFNVPFVVVRAVSDLANGEAEMSFEAFLEKAAVSSSQTVEALVSQL</sequence>
<gene>
    <name evidence="1" type="primary">mtnN</name>
    <name type="ordered locus">SA1427</name>
</gene>
<proteinExistence type="evidence at protein level"/>
<organism>
    <name type="scientific">Staphylococcus aureus (strain N315)</name>
    <dbReference type="NCBI Taxonomy" id="158879"/>
    <lineage>
        <taxon>Bacteria</taxon>
        <taxon>Bacillati</taxon>
        <taxon>Bacillota</taxon>
        <taxon>Bacilli</taxon>
        <taxon>Bacillales</taxon>
        <taxon>Staphylococcaceae</taxon>
        <taxon>Staphylococcus</taxon>
    </lineage>
</organism>